<organism>
    <name type="scientific">Aliivibrio salmonicida (strain LFI1238)</name>
    <name type="common">Vibrio salmonicida (strain LFI1238)</name>
    <dbReference type="NCBI Taxonomy" id="316275"/>
    <lineage>
        <taxon>Bacteria</taxon>
        <taxon>Pseudomonadati</taxon>
        <taxon>Pseudomonadota</taxon>
        <taxon>Gammaproteobacteria</taxon>
        <taxon>Vibrionales</taxon>
        <taxon>Vibrionaceae</taxon>
        <taxon>Aliivibrio</taxon>
    </lineage>
</organism>
<accession>B6EPV3</accession>
<protein>
    <recommendedName>
        <fullName evidence="1">Fructose-1,6-bisphosphatase class 1</fullName>
        <shortName evidence="1">FBPase class 1</shortName>
        <ecNumber evidence="1">3.1.3.11</ecNumber>
    </recommendedName>
    <alternativeName>
        <fullName evidence="1">D-fructose-1,6-bisphosphate 1-phosphohydrolase class 1</fullName>
    </alternativeName>
</protein>
<sequence>MSEIRTLGEFIVAKQHDFPHASGELSSLIGSIKLAAKIVNREINKAGLVDITGASGDENIQGEQQQKLDIYANDKFKAALENRDQVCGVASEEEDEAVAFNKELNKNAKYVVLMDPLDGSSNIDVNVSVGTIFSIYRRISPIGSPATEEDFLQPGNKQVAAGYIIYGSSTMLVYTTGNGVHGFTYDPSLGVFCLSHEDMKIPQDGNIYSINEGNYIRFPEGVKQYLKYCQEIKPAENRPYTSRYIGSLVADFHRNLLKGGIYLYPSTQAYPNGKLRLLYECNPMAMLIEEAGGKATSGEERILDITPTELHQRVPFFVGSINMVDKVQNFLDEWQD</sequence>
<dbReference type="EC" id="3.1.3.11" evidence="1"/>
<dbReference type="EMBL" id="FM178379">
    <property type="protein sequence ID" value="CAQ78031.1"/>
    <property type="molecule type" value="Genomic_DNA"/>
</dbReference>
<dbReference type="RefSeq" id="WP_012549174.1">
    <property type="nucleotide sequence ID" value="NC_011312.1"/>
</dbReference>
<dbReference type="SMR" id="B6EPV3"/>
<dbReference type="KEGG" id="vsa:VSAL_I0346"/>
<dbReference type="eggNOG" id="COG0158">
    <property type="taxonomic scope" value="Bacteria"/>
</dbReference>
<dbReference type="HOGENOM" id="CLU_039977_2_2_6"/>
<dbReference type="UniPathway" id="UPA00138"/>
<dbReference type="Proteomes" id="UP000001730">
    <property type="component" value="Chromosome 1"/>
</dbReference>
<dbReference type="GO" id="GO:0005829">
    <property type="term" value="C:cytosol"/>
    <property type="evidence" value="ECO:0007669"/>
    <property type="project" value="TreeGrafter"/>
</dbReference>
<dbReference type="GO" id="GO:0042132">
    <property type="term" value="F:fructose 1,6-bisphosphate 1-phosphatase activity"/>
    <property type="evidence" value="ECO:0007669"/>
    <property type="project" value="UniProtKB-UniRule"/>
</dbReference>
<dbReference type="GO" id="GO:0000287">
    <property type="term" value="F:magnesium ion binding"/>
    <property type="evidence" value="ECO:0007669"/>
    <property type="project" value="UniProtKB-UniRule"/>
</dbReference>
<dbReference type="GO" id="GO:0030388">
    <property type="term" value="P:fructose 1,6-bisphosphate metabolic process"/>
    <property type="evidence" value="ECO:0007669"/>
    <property type="project" value="TreeGrafter"/>
</dbReference>
<dbReference type="GO" id="GO:0006002">
    <property type="term" value="P:fructose 6-phosphate metabolic process"/>
    <property type="evidence" value="ECO:0007669"/>
    <property type="project" value="TreeGrafter"/>
</dbReference>
<dbReference type="GO" id="GO:0006000">
    <property type="term" value="P:fructose metabolic process"/>
    <property type="evidence" value="ECO:0007669"/>
    <property type="project" value="TreeGrafter"/>
</dbReference>
<dbReference type="GO" id="GO:0006094">
    <property type="term" value="P:gluconeogenesis"/>
    <property type="evidence" value="ECO:0007669"/>
    <property type="project" value="UniProtKB-UniRule"/>
</dbReference>
<dbReference type="GO" id="GO:0005986">
    <property type="term" value="P:sucrose biosynthetic process"/>
    <property type="evidence" value="ECO:0007669"/>
    <property type="project" value="TreeGrafter"/>
</dbReference>
<dbReference type="CDD" id="cd00354">
    <property type="entry name" value="FBPase"/>
    <property type="match status" value="1"/>
</dbReference>
<dbReference type="FunFam" id="3.30.540.10:FF:000002">
    <property type="entry name" value="Fructose-1,6-bisphosphatase class 1"/>
    <property type="match status" value="1"/>
</dbReference>
<dbReference type="FunFam" id="3.40.190.80:FF:000001">
    <property type="entry name" value="Fructose-1,6-bisphosphatase class 1"/>
    <property type="match status" value="1"/>
</dbReference>
<dbReference type="Gene3D" id="3.40.190.80">
    <property type="match status" value="1"/>
</dbReference>
<dbReference type="Gene3D" id="3.30.540.10">
    <property type="entry name" value="Fructose-1,6-Bisphosphatase, subunit A, domain 1"/>
    <property type="match status" value="1"/>
</dbReference>
<dbReference type="HAMAP" id="MF_01855">
    <property type="entry name" value="FBPase_class1"/>
    <property type="match status" value="1"/>
</dbReference>
<dbReference type="InterPro" id="IPR044015">
    <property type="entry name" value="FBPase_C_dom"/>
</dbReference>
<dbReference type="InterPro" id="IPR000146">
    <property type="entry name" value="FBPase_class-1"/>
</dbReference>
<dbReference type="InterPro" id="IPR033391">
    <property type="entry name" value="FBPase_N"/>
</dbReference>
<dbReference type="InterPro" id="IPR028343">
    <property type="entry name" value="FBPtase"/>
</dbReference>
<dbReference type="InterPro" id="IPR020548">
    <property type="entry name" value="Fructose_bisphosphatase_AS"/>
</dbReference>
<dbReference type="NCBIfam" id="NF006778">
    <property type="entry name" value="PRK09293.1-1"/>
    <property type="match status" value="1"/>
</dbReference>
<dbReference type="NCBIfam" id="NF006779">
    <property type="entry name" value="PRK09293.1-3"/>
    <property type="match status" value="1"/>
</dbReference>
<dbReference type="PANTHER" id="PTHR11556">
    <property type="entry name" value="FRUCTOSE-1,6-BISPHOSPHATASE-RELATED"/>
    <property type="match status" value="1"/>
</dbReference>
<dbReference type="PANTHER" id="PTHR11556:SF35">
    <property type="entry name" value="SEDOHEPTULOSE-1,7-BISPHOSPHATASE, CHLOROPLASTIC"/>
    <property type="match status" value="1"/>
</dbReference>
<dbReference type="Pfam" id="PF00316">
    <property type="entry name" value="FBPase"/>
    <property type="match status" value="1"/>
</dbReference>
<dbReference type="Pfam" id="PF18913">
    <property type="entry name" value="FBPase_C"/>
    <property type="match status" value="1"/>
</dbReference>
<dbReference type="PIRSF" id="PIRSF500210">
    <property type="entry name" value="FBPtase"/>
    <property type="match status" value="1"/>
</dbReference>
<dbReference type="PIRSF" id="PIRSF000904">
    <property type="entry name" value="FBPtase_SBPase"/>
    <property type="match status" value="1"/>
</dbReference>
<dbReference type="PRINTS" id="PR00115">
    <property type="entry name" value="F16BPHPHTASE"/>
</dbReference>
<dbReference type="SUPFAM" id="SSF56655">
    <property type="entry name" value="Carbohydrate phosphatase"/>
    <property type="match status" value="1"/>
</dbReference>
<dbReference type="PROSITE" id="PS00124">
    <property type="entry name" value="FBPASE"/>
    <property type="match status" value="1"/>
</dbReference>
<reference key="1">
    <citation type="journal article" date="2008" name="BMC Genomics">
        <title>The genome sequence of the fish pathogen Aliivibrio salmonicida strain LFI1238 shows extensive evidence of gene decay.</title>
        <authorList>
            <person name="Hjerde E."/>
            <person name="Lorentzen M.S."/>
            <person name="Holden M.T."/>
            <person name="Seeger K."/>
            <person name="Paulsen S."/>
            <person name="Bason N."/>
            <person name="Churcher C."/>
            <person name="Harris D."/>
            <person name="Norbertczak H."/>
            <person name="Quail M.A."/>
            <person name="Sanders S."/>
            <person name="Thurston S."/>
            <person name="Parkhill J."/>
            <person name="Willassen N.P."/>
            <person name="Thomson N.R."/>
        </authorList>
    </citation>
    <scope>NUCLEOTIDE SEQUENCE [LARGE SCALE GENOMIC DNA]</scope>
    <source>
        <strain>LFI1238</strain>
    </source>
</reference>
<gene>
    <name evidence="1" type="primary">fbp</name>
    <name type="ordered locus">VSAL_I0346</name>
</gene>
<evidence type="ECO:0000255" key="1">
    <source>
        <dbReference type="HAMAP-Rule" id="MF_01855"/>
    </source>
</evidence>
<proteinExistence type="inferred from homology"/>
<feature type="chain" id="PRO_0000364458" description="Fructose-1,6-bisphosphatase class 1">
    <location>
        <begin position="1"/>
        <end position="336"/>
    </location>
</feature>
<feature type="binding site" evidence="1">
    <location>
        <position position="92"/>
    </location>
    <ligand>
        <name>Mg(2+)</name>
        <dbReference type="ChEBI" id="CHEBI:18420"/>
        <label>1</label>
    </ligand>
</feature>
<feature type="binding site" evidence="1">
    <location>
        <position position="115"/>
    </location>
    <ligand>
        <name>Mg(2+)</name>
        <dbReference type="ChEBI" id="CHEBI:18420"/>
        <label>1</label>
    </ligand>
</feature>
<feature type="binding site" evidence="1">
    <location>
        <position position="115"/>
    </location>
    <ligand>
        <name>Mg(2+)</name>
        <dbReference type="ChEBI" id="CHEBI:18420"/>
        <label>2</label>
    </ligand>
</feature>
<feature type="binding site" evidence="1">
    <location>
        <position position="117"/>
    </location>
    <ligand>
        <name>Mg(2+)</name>
        <dbReference type="ChEBI" id="CHEBI:18420"/>
        <label>1</label>
    </ligand>
</feature>
<feature type="binding site" evidence="1">
    <location>
        <begin position="118"/>
        <end position="121"/>
    </location>
    <ligand>
        <name>substrate</name>
    </ligand>
</feature>
<feature type="binding site" evidence="1">
    <location>
        <position position="118"/>
    </location>
    <ligand>
        <name>Mg(2+)</name>
        <dbReference type="ChEBI" id="CHEBI:18420"/>
        <label>2</label>
    </ligand>
</feature>
<feature type="binding site" evidence="1">
    <location>
        <position position="211"/>
    </location>
    <ligand>
        <name>substrate</name>
    </ligand>
</feature>
<feature type="binding site" evidence="1">
    <location>
        <position position="244"/>
    </location>
    <ligand>
        <name>substrate</name>
    </ligand>
</feature>
<feature type="binding site" evidence="1">
    <location>
        <begin position="262"/>
        <end position="264"/>
    </location>
    <ligand>
        <name>substrate</name>
    </ligand>
</feature>
<feature type="binding site" evidence="1">
    <location>
        <position position="274"/>
    </location>
    <ligand>
        <name>substrate</name>
    </ligand>
</feature>
<feature type="binding site" evidence="1">
    <location>
        <position position="280"/>
    </location>
    <ligand>
        <name>Mg(2+)</name>
        <dbReference type="ChEBI" id="CHEBI:18420"/>
        <label>2</label>
    </ligand>
</feature>
<comment type="catalytic activity">
    <reaction evidence="1">
        <text>beta-D-fructose 1,6-bisphosphate + H2O = beta-D-fructose 6-phosphate + phosphate</text>
        <dbReference type="Rhea" id="RHEA:11064"/>
        <dbReference type="ChEBI" id="CHEBI:15377"/>
        <dbReference type="ChEBI" id="CHEBI:32966"/>
        <dbReference type="ChEBI" id="CHEBI:43474"/>
        <dbReference type="ChEBI" id="CHEBI:57634"/>
        <dbReference type="EC" id="3.1.3.11"/>
    </reaction>
</comment>
<comment type="cofactor">
    <cofactor evidence="1">
        <name>Mg(2+)</name>
        <dbReference type="ChEBI" id="CHEBI:18420"/>
    </cofactor>
    <text evidence="1">Binds 2 magnesium ions per subunit.</text>
</comment>
<comment type="pathway">
    <text evidence="1">Carbohydrate biosynthesis; gluconeogenesis.</text>
</comment>
<comment type="subunit">
    <text evidence="1">Homotetramer.</text>
</comment>
<comment type="subcellular location">
    <subcellularLocation>
        <location evidence="1">Cytoplasm</location>
    </subcellularLocation>
</comment>
<comment type="similarity">
    <text evidence="1">Belongs to the FBPase class 1 family.</text>
</comment>
<name>F16PA_ALISL</name>
<keyword id="KW-0119">Carbohydrate metabolism</keyword>
<keyword id="KW-0963">Cytoplasm</keyword>
<keyword id="KW-0378">Hydrolase</keyword>
<keyword id="KW-0460">Magnesium</keyword>
<keyword id="KW-0479">Metal-binding</keyword>